<keyword id="KW-0227">DNA damage</keyword>
<keyword id="KW-0228">DNA excision</keyword>
<keyword id="KW-0234">DNA repair</keyword>
<keyword id="KW-0267">Excision nuclease</keyword>
<keyword id="KW-0378">Hydrolase</keyword>
<keyword id="KW-1185">Reference proteome</keyword>
<keyword id="KW-0742">SOS response</keyword>
<gene>
    <name type="primary">cho</name>
    <name type="ordered locus">STM1309</name>
</gene>
<feature type="chain" id="PRO_0000138374" description="Excinuclease cho">
    <location>
        <begin position="1"/>
        <end position="293"/>
    </location>
</feature>
<feature type="domain" description="GIY-YIG" evidence="2">
    <location>
        <begin position="33"/>
        <end position="108"/>
    </location>
</feature>
<organism>
    <name type="scientific">Salmonella typhimurium (strain LT2 / SGSC1412 / ATCC 700720)</name>
    <dbReference type="NCBI Taxonomy" id="99287"/>
    <lineage>
        <taxon>Bacteria</taxon>
        <taxon>Pseudomonadati</taxon>
        <taxon>Pseudomonadota</taxon>
        <taxon>Gammaproteobacteria</taxon>
        <taxon>Enterobacterales</taxon>
        <taxon>Enterobacteriaceae</taxon>
        <taxon>Salmonella</taxon>
    </lineage>
</organism>
<reference key="1">
    <citation type="journal article" date="2001" name="Nature">
        <title>Complete genome sequence of Salmonella enterica serovar Typhimurium LT2.</title>
        <authorList>
            <person name="McClelland M."/>
            <person name="Sanderson K.E."/>
            <person name="Spieth J."/>
            <person name="Clifton S.W."/>
            <person name="Latreille P."/>
            <person name="Courtney L."/>
            <person name="Porwollik S."/>
            <person name="Ali J."/>
            <person name="Dante M."/>
            <person name="Du F."/>
            <person name="Hou S."/>
            <person name="Layman D."/>
            <person name="Leonard S."/>
            <person name="Nguyen C."/>
            <person name="Scott K."/>
            <person name="Holmes A."/>
            <person name="Grewal N."/>
            <person name="Mulvaney E."/>
            <person name="Ryan E."/>
            <person name="Sun H."/>
            <person name="Florea L."/>
            <person name="Miller W."/>
            <person name="Stoneking T."/>
            <person name="Nhan M."/>
            <person name="Waterston R."/>
            <person name="Wilson R.K."/>
        </authorList>
    </citation>
    <scope>NUCLEOTIDE SEQUENCE [LARGE SCALE GENOMIC DNA]</scope>
    <source>
        <strain>LT2 / SGSC1412 / ATCC 700720</strain>
    </source>
</reference>
<sequence>MVRRQSAPRLEFEAAAIYEYPEHLRPFLSEAPALPGVYIFHSESDTLPLYIGKSVNIRSRVLSHLRTPDEATMLRQARRISWICTAGEMGALLLEARLIKEQQPLFNKRLRRNRQLCSLQLSEQKIEVVSARSVDFSHEPNLFGLFANRRAALQSLQNLADEQKLCYGLLGLEPVSRGRACFRFALKRCAGACCGQETPQAHFLRLQASLERLRVVCWPWKGAIALKESRPQMTQFHIINNWLWLGAVPSLDEAATLVRTPAGFDQDGYKILCKPLMSGQYEIIELHTDCRQS</sequence>
<accession>Q8ZPU6</accession>
<name>CHO_SALTY</name>
<comment type="function">
    <text evidence="1">Incises the DNA at the 3' side of a lesion during nucleotide excision repair. Incises the DNA farther away from the lesion than UvrC. Not able to incise the 5' site of a lesion. When a lesion remains because UvrC is not able to induce the 3' incision, Cho incises the DNA. Then UvrC makes the 5' incision. The combined action of Cho and UvrC broadens the substrate range of nucleotide excision repair (By similarity).</text>
</comment>
<comment type="sequence caution" evidence="3">
    <conflict type="erroneous initiation">
        <sequence resource="EMBL-CDS" id="AAL20234"/>
    </conflict>
</comment>
<evidence type="ECO:0000250" key="1"/>
<evidence type="ECO:0000255" key="2">
    <source>
        <dbReference type="PROSITE-ProRule" id="PRU00977"/>
    </source>
</evidence>
<evidence type="ECO:0000305" key="3"/>
<proteinExistence type="inferred from homology"/>
<dbReference type="EC" id="3.1.25.-"/>
<dbReference type="EMBL" id="AE006468">
    <property type="protein sequence ID" value="AAL20234.1"/>
    <property type="status" value="ALT_INIT"/>
    <property type="molecule type" value="Genomic_DNA"/>
</dbReference>
<dbReference type="RefSeq" id="NP_460275.1">
    <property type="nucleotide sequence ID" value="NC_003197.2"/>
</dbReference>
<dbReference type="RefSeq" id="WP_001064675.1">
    <property type="nucleotide sequence ID" value="NC_003197.2"/>
</dbReference>
<dbReference type="SMR" id="Q8ZPU6"/>
<dbReference type="STRING" id="99287.STM1309"/>
<dbReference type="PaxDb" id="99287-STM1309"/>
<dbReference type="GeneID" id="1252827"/>
<dbReference type="KEGG" id="stm:STM1309"/>
<dbReference type="PATRIC" id="fig|99287.12.peg.1391"/>
<dbReference type="HOGENOM" id="CLU_054721_1_0_6"/>
<dbReference type="PhylomeDB" id="Q8ZPU6"/>
<dbReference type="Proteomes" id="UP000001014">
    <property type="component" value="Chromosome"/>
</dbReference>
<dbReference type="GO" id="GO:0009380">
    <property type="term" value="C:excinuclease repair complex"/>
    <property type="evidence" value="ECO:0000318"/>
    <property type="project" value="GO_Central"/>
</dbReference>
<dbReference type="GO" id="GO:0004518">
    <property type="term" value="F:nuclease activity"/>
    <property type="evidence" value="ECO:0007669"/>
    <property type="project" value="UniProtKB-KW"/>
</dbReference>
<dbReference type="GO" id="GO:0006974">
    <property type="term" value="P:DNA damage response"/>
    <property type="evidence" value="ECO:0000318"/>
    <property type="project" value="GO_Central"/>
</dbReference>
<dbReference type="GO" id="GO:0006289">
    <property type="term" value="P:nucleotide-excision repair"/>
    <property type="evidence" value="ECO:0007669"/>
    <property type="project" value="InterPro"/>
</dbReference>
<dbReference type="GO" id="GO:0009432">
    <property type="term" value="P:SOS response"/>
    <property type="evidence" value="ECO:0007669"/>
    <property type="project" value="UniProtKB-KW"/>
</dbReference>
<dbReference type="CDD" id="cd10434">
    <property type="entry name" value="GIY-YIG_UvrC_Cho"/>
    <property type="match status" value="1"/>
</dbReference>
<dbReference type="FunFam" id="3.40.1440.10:FF:000004">
    <property type="entry name" value="UV-repair endonuclease Cho"/>
    <property type="match status" value="1"/>
</dbReference>
<dbReference type="Gene3D" id="3.40.1440.10">
    <property type="entry name" value="GIY-YIG endonuclease"/>
    <property type="match status" value="1"/>
</dbReference>
<dbReference type="InterPro" id="IPR000305">
    <property type="entry name" value="GIY-YIG_endonuc"/>
</dbReference>
<dbReference type="InterPro" id="IPR035901">
    <property type="entry name" value="GIY-YIG_endonuc_sf"/>
</dbReference>
<dbReference type="InterPro" id="IPR047296">
    <property type="entry name" value="GIY-YIG_UvrC_Cho"/>
</dbReference>
<dbReference type="InterPro" id="IPR050066">
    <property type="entry name" value="UvrABC_protein_C"/>
</dbReference>
<dbReference type="NCBIfam" id="NF007833">
    <property type="entry name" value="PRK10545.1"/>
    <property type="match status" value="1"/>
</dbReference>
<dbReference type="PANTHER" id="PTHR30562:SF10">
    <property type="entry name" value="EXCINUCLEASE CHO"/>
    <property type="match status" value="1"/>
</dbReference>
<dbReference type="PANTHER" id="PTHR30562">
    <property type="entry name" value="UVRC/OXIDOREDUCTASE"/>
    <property type="match status" value="1"/>
</dbReference>
<dbReference type="SMART" id="SM00465">
    <property type="entry name" value="GIYc"/>
    <property type="match status" value="1"/>
</dbReference>
<dbReference type="SUPFAM" id="SSF82771">
    <property type="entry name" value="GIY-YIG endonuclease"/>
    <property type="match status" value="1"/>
</dbReference>
<dbReference type="PROSITE" id="PS50164">
    <property type="entry name" value="GIY_YIG"/>
    <property type="match status" value="1"/>
</dbReference>
<protein>
    <recommendedName>
        <fullName>Excinuclease cho</fullName>
        <ecNumber>3.1.25.-</ecNumber>
    </recommendedName>
    <alternativeName>
        <fullName>Endonuclease cho</fullName>
    </alternativeName>
    <alternativeName>
        <fullName>UvrC homolog protein</fullName>
    </alternativeName>
</protein>